<accession>P9WLB8</accession>
<accession>L0T994</accession>
<accession>P64991</accession>
<accession>P71900</accession>
<protein>
    <recommendedName>
        <fullName>Uncharacterized protein MT2374</fullName>
    </recommendedName>
</protein>
<dbReference type="EMBL" id="AE000516">
    <property type="protein sequence ID" value="AAK46667.1"/>
    <property type="molecule type" value="Genomic_DNA"/>
</dbReference>
<dbReference type="PIR" id="A70703">
    <property type="entry name" value="A70703"/>
</dbReference>
<dbReference type="RefSeq" id="WP_003411919.1">
    <property type="nucleotide sequence ID" value="NZ_KK341227.1"/>
</dbReference>
<dbReference type="SMR" id="P9WLB8"/>
<dbReference type="KEGG" id="mtc:MT2374"/>
<dbReference type="PATRIC" id="fig|83331.31.peg.2558"/>
<dbReference type="HOGENOM" id="CLU_2451371_0_0_11"/>
<dbReference type="Proteomes" id="UP000001020">
    <property type="component" value="Chromosome"/>
</dbReference>
<proteinExistence type="predicted"/>
<organism>
    <name type="scientific">Mycobacterium tuberculosis (strain CDC 1551 / Oshkosh)</name>
    <dbReference type="NCBI Taxonomy" id="83331"/>
    <lineage>
        <taxon>Bacteria</taxon>
        <taxon>Bacillati</taxon>
        <taxon>Actinomycetota</taxon>
        <taxon>Actinomycetes</taxon>
        <taxon>Mycobacteriales</taxon>
        <taxon>Mycobacteriaceae</taxon>
        <taxon>Mycobacterium</taxon>
        <taxon>Mycobacterium tuberculosis complex</taxon>
    </lineage>
</organism>
<sequence length="89" mass="9493">MMKEIELHLVDAAAPSGEIAIKDLAALATALQELTTRISRDPINTPGPGRTKQFMEELSQLASAPGPDIDGGIDLTDDEFQAFLQAARS</sequence>
<keyword id="KW-1185">Reference proteome</keyword>
<name>Y2312_MYCTO</name>
<feature type="chain" id="PRO_0000427506" description="Uncharacterized protein MT2374">
    <location>
        <begin position="1"/>
        <end position="89"/>
    </location>
</feature>
<reference key="1">
    <citation type="journal article" date="2002" name="J. Bacteriol.">
        <title>Whole-genome comparison of Mycobacterium tuberculosis clinical and laboratory strains.</title>
        <authorList>
            <person name="Fleischmann R.D."/>
            <person name="Alland D."/>
            <person name="Eisen J.A."/>
            <person name="Carpenter L."/>
            <person name="White O."/>
            <person name="Peterson J.D."/>
            <person name="DeBoy R.T."/>
            <person name="Dodson R.J."/>
            <person name="Gwinn M.L."/>
            <person name="Haft D.H."/>
            <person name="Hickey E.K."/>
            <person name="Kolonay J.F."/>
            <person name="Nelson W.C."/>
            <person name="Umayam L.A."/>
            <person name="Ermolaeva M.D."/>
            <person name="Salzberg S.L."/>
            <person name="Delcher A."/>
            <person name="Utterback T.R."/>
            <person name="Weidman J.F."/>
            <person name="Khouri H.M."/>
            <person name="Gill J."/>
            <person name="Mikula A."/>
            <person name="Bishai W."/>
            <person name="Jacobs W.R. Jr."/>
            <person name="Venter J.C."/>
            <person name="Fraser C.M."/>
        </authorList>
    </citation>
    <scope>NUCLEOTIDE SEQUENCE [LARGE SCALE GENOMIC DNA]</scope>
    <source>
        <strain>CDC 1551 / Oshkosh</strain>
    </source>
</reference>
<gene>
    <name type="ordered locus">MT2374</name>
</gene>